<evidence type="ECO:0000250" key="1"/>
<evidence type="ECO:0000305" key="2"/>
<name>MSHC_STRAW</name>
<protein>
    <recommendedName>
        <fullName>L-cysteine:1D-myo-inositol 2-amino-2-deoxy-alpha-D-glucopyranoside ligase</fullName>
        <shortName>L-Cys:GlcN-Ins ligase</shortName>
        <ecNumber>6.3.1.13</ecNumber>
    </recommendedName>
    <alternativeName>
        <fullName>Mycothiol ligase</fullName>
        <shortName>MSH ligase</shortName>
    </alternativeName>
</protein>
<reference key="1">
    <citation type="journal article" date="2001" name="Proc. Natl. Acad. Sci. U.S.A.">
        <title>Genome sequence of an industrial microorganism Streptomyces avermitilis: deducing the ability of producing secondary metabolites.</title>
        <authorList>
            <person name="Omura S."/>
            <person name="Ikeda H."/>
            <person name="Ishikawa J."/>
            <person name="Hanamoto A."/>
            <person name="Takahashi C."/>
            <person name="Shinose M."/>
            <person name="Takahashi Y."/>
            <person name="Horikawa H."/>
            <person name="Nakazawa H."/>
            <person name="Osonoe T."/>
            <person name="Kikuchi H."/>
            <person name="Shiba T."/>
            <person name="Sakaki Y."/>
            <person name="Hattori M."/>
        </authorList>
    </citation>
    <scope>NUCLEOTIDE SEQUENCE [LARGE SCALE GENOMIC DNA]</scope>
    <source>
        <strain>ATCC 31267 / DSM 46492 / JCM 5070 / NBRC 14893 / NCIMB 12804 / NRRL 8165 / MA-4680</strain>
    </source>
</reference>
<reference key="2">
    <citation type="journal article" date="2003" name="Nat. Biotechnol.">
        <title>Complete genome sequence and comparative analysis of the industrial microorganism Streptomyces avermitilis.</title>
        <authorList>
            <person name="Ikeda H."/>
            <person name="Ishikawa J."/>
            <person name="Hanamoto A."/>
            <person name="Shinose M."/>
            <person name="Kikuchi H."/>
            <person name="Shiba T."/>
            <person name="Sakaki Y."/>
            <person name="Hattori M."/>
            <person name="Omura S."/>
        </authorList>
    </citation>
    <scope>NUCLEOTIDE SEQUENCE [LARGE SCALE GENOMIC DNA]</scope>
    <source>
        <strain>ATCC 31267 / DSM 46492 / JCM 5070 / NBRC 14893 / NCIMB 12804 / NRRL 8165 / MA-4680</strain>
    </source>
</reference>
<organism>
    <name type="scientific">Streptomyces avermitilis (strain ATCC 31267 / DSM 46492 / JCM 5070 / NBRC 14893 / NCIMB 12804 / NRRL 8165 / MA-4680)</name>
    <dbReference type="NCBI Taxonomy" id="227882"/>
    <lineage>
        <taxon>Bacteria</taxon>
        <taxon>Bacillati</taxon>
        <taxon>Actinomycetota</taxon>
        <taxon>Actinomycetes</taxon>
        <taxon>Kitasatosporales</taxon>
        <taxon>Streptomycetaceae</taxon>
        <taxon>Streptomyces</taxon>
    </lineage>
</organism>
<feature type="chain" id="PRO_0000159489" description="L-cysteine:1D-myo-inositol 2-amino-2-deoxy-alpha-D-glucopyranoside ligase">
    <location>
        <begin position="1"/>
        <end position="409"/>
    </location>
</feature>
<feature type="short sequence motif" description="'HIGH' region">
    <location>
        <begin position="45"/>
        <end position="55"/>
    </location>
</feature>
<feature type="short sequence motif" description="'ERGGDP' region">
    <location>
        <begin position="183"/>
        <end position="188"/>
    </location>
</feature>
<feature type="short sequence motif" description="'KMSKS' region">
    <location>
        <begin position="286"/>
        <end position="290"/>
    </location>
</feature>
<feature type="binding site" evidence="1">
    <location>
        <begin position="43"/>
        <end position="46"/>
    </location>
    <ligand>
        <name>L-cysteinyl-5'-AMP</name>
        <dbReference type="ChEBI" id="CHEBI:144924"/>
    </ligand>
</feature>
<feature type="binding site" evidence="1">
    <location>
        <position position="43"/>
    </location>
    <ligand>
        <name>Zn(2+)</name>
        <dbReference type="ChEBI" id="CHEBI:29105"/>
    </ligand>
</feature>
<feature type="binding site" evidence="1">
    <location>
        <position position="58"/>
    </location>
    <ligand>
        <name>L-cysteinyl-5'-AMP</name>
        <dbReference type="ChEBI" id="CHEBI:144924"/>
    </ligand>
</feature>
<feature type="binding site" evidence="1">
    <location>
        <begin position="81"/>
        <end position="83"/>
    </location>
    <ligand>
        <name>L-cysteinyl-5'-AMP</name>
        <dbReference type="ChEBI" id="CHEBI:144924"/>
    </ligand>
</feature>
<feature type="binding site" evidence="1">
    <location>
        <position position="224"/>
    </location>
    <ligand>
        <name>L-cysteinyl-5'-AMP</name>
        <dbReference type="ChEBI" id="CHEBI:144924"/>
    </ligand>
</feature>
<feature type="binding site" evidence="1">
    <location>
        <position position="228"/>
    </location>
    <ligand>
        <name>Zn(2+)</name>
        <dbReference type="ChEBI" id="CHEBI:29105"/>
    </ligand>
</feature>
<feature type="binding site" evidence="1">
    <location>
        <begin position="246"/>
        <end position="248"/>
    </location>
    <ligand>
        <name>L-cysteinyl-5'-AMP</name>
        <dbReference type="ChEBI" id="CHEBI:144924"/>
    </ligand>
</feature>
<feature type="binding site" evidence="1">
    <location>
        <position position="253"/>
    </location>
    <ligand>
        <name>Zn(2+)</name>
        <dbReference type="ChEBI" id="CHEBI:29105"/>
    </ligand>
</feature>
<feature type="binding site" evidence="1">
    <location>
        <position position="280"/>
    </location>
    <ligand>
        <name>L-cysteinyl-5'-AMP</name>
        <dbReference type="ChEBI" id="CHEBI:144924"/>
    </ligand>
</feature>
<comment type="function">
    <text evidence="1">Catalyzes the ATP-dependent condensation of GlcN-Ins and L-cysteine to form L-Cys-GlcN-Ins.</text>
</comment>
<comment type="catalytic activity">
    <reaction>
        <text>1D-myo-inositol 2-amino-2-deoxy-alpha-D-glucopyranoside + L-cysteine + ATP = 1D-myo-inositol 2-(L-cysteinylamino)-2-deoxy-alpha-D-glucopyranoside + AMP + diphosphate + H(+)</text>
        <dbReference type="Rhea" id="RHEA:26176"/>
        <dbReference type="ChEBI" id="CHEBI:15378"/>
        <dbReference type="ChEBI" id="CHEBI:30616"/>
        <dbReference type="ChEBI" id="CHEBI:33019"/>
        <dbReference type="ChEBI" id="CHEBI:35235"/>
        <dbReference type="ChEBI" id="CHEBI:58886"/>
        <dbReference type="ChEBI" id="CHEBI:58887"/>
        <dbReference type="ChEBI" id="CHEBI:456215"/>
        <dbReference type="EC" id="6.3.1.13"/>
    </reaction>
</comment>
<comment type="cofactor">
    <cofactor evidence="1">
        <name>Zn(2+)</name>
        <dbReference type="ChEBI" id="CHEBI:29105"/>
    </cofactor>
    <text evidence="1">Binds 1 zinc ion per subunit.</text>
</comment>
<comment type="subunit">
    <text evidence="1">Monomer.</text>
</comment>
<comment type="similarity">
    <text evidence="2">Belongs to the class-I aminoacyl-tRNA synthetase family. MshC subfamily.</text>
</comment>
<accession>Q828M2</accession>
<proteinExistence type="inferred from homology"/>
<gene>
    <name type="primary">mshC</name>
    <name type="synonym">cysS2</name>
    <name type="ordered locus">SAV_6647</name>
</gene>
<sequence length="409" mass="44117">MHAWPASEVPALPGEGRDLRIHDTATGGVIPLHPGPVARIYVCGITPYDATHMGHAATYNAFDLVQRVWLDTKRQVHYVQNVTDVDDPLLERAERDGVDWVGLAEKETALFREDMTALRMLPPQHYIGAVEAIPGIVPLVERLRDAGAAYELDGDVYFSVEADPHFGKVSNLDAAAMRLLSAERGGDPDRPGKKNPLDPMLWMAAREGEPSWDGASLGRGRPGWHIECVAIALDHLGMGFDVQGGGSDLAFPHHEMGASHAQALTGEFPMAKAYVHAGMVALNGEKMSKSKGNLVFVSKLRRDGVDPAAIRLALLAHHYRSDWEWTDAVLEEALARLGTWRAAVSRPDGPPAEALVEEIRDALANDLDAPAALAAVDRWAALQHERGGTDEGAPGVVSRAVDALLGVAL</sequence>
<dbReference type="EC" id="6.3.1.13"/>
<dbReference type="EMBL" id="BA000030">
    <property type="protein sequence ID" value="BAC74358.1"/>
    <property type="molecule type" value="Genomic_DNA"/>
</dbReference>
<dbReference type="RefSeq" id="WP_010988047.1">
    <property type="nucleotide sequence ID" value="NZ_JZJK01000082.1"/>
</dbReference>
<dbReference type="SMR" id="Q828M2"/>
<dbReference type="GeneID" id="41543718"/>
<dbReference type="KEGG" id="sma:SAVERM_6647"/>
<dbReference type="eggNOG" id="COG0215">
    <property type="taxonomic scope" value="Bacteria"/>
</dbReference>
<dbReference type="HOGENOM" id="CLU_013528_0_0_11"/>
<dbReference type="OrthoDB" id="9815130at2"/>
<dbReference type="Proteomes" id="UP000000428">
    <property type="component" value="Chromosome"/>
</dbReference>
<dbReference type="GO" id="GO:0005829">
    <property type="term" value="C:cytosol"/>
    <property type="evidence" value="ECO:0007669"/>
    <property type="project" value="TreeGrafter"/>
</dbReference>
<dbReference type="GO" id="GO:0005524">
    <property type="term" value="F:ATP binding"/>
    <property type="evidence" value="ECO:0007669"/>
    <property type="project" value="UniProtKB-KW"/>
</dbReference>
<dbReference type="GO" id="GO:0035446">
    <property type="term" value="F:cysteine-glucosaminylinositol ligase activity"/>
    <property type="evidence" value="ECO:0007669"/>
    <property type="project" value="UniProtKB-UniRule"/>
</dbReference>
<dbReference type="GO" id="GO:0004817">
    <property type="term" value="F:cysteine-tRNA ligase activity"/>
    <property type="evidence" value="ECO:0007669"/>
    <property type="project" value="TreeGrafter"/>
</dbReference>
<dbReference type="GO" id="GO:0008270">
    <property type="term" value="F:zinc ion binding"/>
    <property type="evidence" value="ECO:0007669"/>
    <property type="project" value="UniProtKB-UniRule"/>
</dbReference>
<dbReference type="GO" id="GO:0006423">
    <property type="term" value="P:cysteinyl-tRNA aminoacylation"/>
    <property type="evidence" value="ECO:0007669"/>
    <property type="project" value="TreeGrafter"/>
</dbReference>
<dbReference type="GO" id="GO:0010125">
    <property type="term" value="P:mycothiol biosynthetic process"/>
    <property type="evidence" value="ECO:0007669"/>
    <property type="project" value="UniProtKB-UniRule"/>
</dbReference>
<dbReference type="CDD" id="cd00672">
    <property type="entry name" value="CysRS_core"/>
    <property type="match status" value="1"/>
</dbReference>
<dbReference type="FunFam" id="1.20.120.640:FF:000001">
    <property type="entry name" value="L-cysteine:1D-myo-inositol 2-amino-2-deoxy-alpha-D-glucopyranoside ligase"/>
    <property type="match status" value="1"/>
</dbReference>
<dbReference type="FunFam" id="3.40.50.620:FF:000134">
    <property type="entry name" value="L-cysteine:1D-myo-inositol 2-amino-2-deoxy-alpha-D-glucopyranoside ligase"/>
    <property type="match status" value="1"/>
</dbReference>
<dbReference type="Gene3D" id="1.20.120.640">
    <property type="entry name" value="Anticodon-binding domain of a subclass of class I aminoacyl-tRNA synthetases"/>
    <property type="match status" value="1"/>
</dbReference>
<dbReference type="Gene3D" id="3.40.50.620">
    <property type="entry name" value="HUPs"/>
    <property type="match status" value="1"/>
</dbReference>
<dbReference type="HAMAP" id="MF_01697">
    <property type="entry name" value="MshC"/>
    <property type="match status" value="1"/>
</dbReference>
<dbReference type="InterPro" id="IPR024909">
    <property type="entry name" value="Cys-tRNA/MSH_ligase"/>
</dbReference>
<dbReference type="InterPro" id="IPR017812">
    <property type="entry name" value="Mycothiol_ligase_MshC"/>
</dbReference>
<dbReference type="InterPro" id="IPR014729">
    <property type="entry name" value="Rossmann-like_a/b/a_fold"/>
</dbReference>
<dbReference type="InterPro" id="IPR032678">
    <property type="entry name" value="tRNA-synt_1_cat_dom"/>
</dbReference>
<dbReference type="NCBIfam" id="TIGR03447">
    <property type="entry name" value="mycothiol_MshC"/>
    <property type="match status" value="1"/>
</dbReference>
<dbReference type="PANTHER" id="PTHR10890:SF3">
    <property type="entry name" value="CYSTEINE--TRNA LIGASE, CYTOPLASMIC"/>
    <property type="match status" value="1"/>
</dbReference>
<dbReference type="PANTHER" id="PTHR10890">
    <property type="entry name" value="CYSTEINYL-TRNA SYNTHETASE"/>
    <property type="match status" value="1"/>
</dbReference>
<dbReference type="Pfam" id="PF01406">
    <property type="entry name" value="tRNA-synt_1e"/>
    <property type="match status" value="1"/>
</dbReference>
<dbReference type="PRINTS" id="PR00983">
    <property type="entry name" value="TRNASYNTHCYS"/>
</dbReference>
<dbReference type="SUPFAM" id="SSF52374">
    <property type="entry name" value="Nucleotidylyl transferase"/>
    <property type="match status" value="1"/>
</dbReference>
<keyword id="KW-0067">ATP-binding</keyword>
<keyword id="KW-0436">Ligase</keyword>
<keyword id="KW-0479">Metal-binding</keyword>
<keyword id="KW-0547">Nucleotide-binding</keyword>
<keyword id="KW-1185">Reference proteome</keyword>
<keyword id="KW-0862">Zinc</keyword>